<gene>
    <name type="primary">KMT2B</name>
    <name type="synonym">HRX2</name>
    <name type="synonym">KIAA0304</name>
    <name type="synonym">MLL2</name>
    <name type="synonym">MLL4</name>
    <name type="synonym">TRX2</name>
    <name type="synonym">WBP7</name>
</gene>
<comment type="function">
    <text evidence="1 13 20 21">Histone methyltransferase that catalyzes methyl group transfer from S-adenosyl-L-methionine to the epsilon-amino group of 'Lys-4' of histone H3 (H3K4) via a non-processive mechanism. Part of chromatin remodeling machinery predominantly forms H3K4me1 and H3K4me2 methylation marks at active chromatin sites where transcription and DNA repair take place (PubMed:17707229, PubMed:25561738). Likely plays a redundant role with KMT2C in enriching H3K4me1 marks on primed and active enhancer elements (PubMed:24081332). Plays a central role in beta-globin locus transcription regulation by being recruited by NFE2 (PubMed:17707229). Plays an important role in controlling bulk H3K4me during oocyte growth and preimplantation development (By similarity). Required during the transcriptionally active period of oocyte growth for the establishment and/or maintenance of bulk H3K4 trimethylation (H3K4me3), global transcriptional silencing that preceeds resumption of meiosis, oocyte survival and normal zygotic genome activation (By similarity).</text>
</comment>
<comment type="catalytic activity">
    <reaction evidence="21">
        <text>L-lysyl(4)-[histone H3] + S-adenosyl-L-methionine = N(6)-methyl-L-lysyl(4)-[histone H3] + S-adenosyl-L-homocysteine + H(+)</text>
        <dbReference type="Rhea" id="RHEA:60264"/>
        <dbReference type="Rhea" id="RHEA-COMP:15543"/>
        <dbReference type="Rhea" id="RHEA-COMP:15547"/>
        <dbReference type="ChEBI" id="CHEBI:15378"/>
        <dbReference type="ChEBI" id="CHEBI:29969"/>
        <dbReference type="ChEBI" id="CHEBI:57856"/>
        <dbReference type="ChEBI" id="CHEBI:59789"/>
        <dbReference type="ChEBI" id="CHEBI:61929"/>
        <dbReference type="EC" id="2.1.1.364"/>
    </reaction>
    <physiologicalReaction direction="left-to-right" evidence="29 30">
        <dbReference type="Rhea" id="RHEA:60265"/>
    </physiologicalReaction>
</comment>
<comment type="catalytic activity">
    <reaction evidence="21">
        <text>N(6)-methyl-L-lysyl(4)-[histone H3] + S-adenosyl-L-methionine = N(6),N(6)-dimethyl-L-lysyl(4)-[histone H3] + S-adenosyl-L-homocysteine + H(+)</text>
        <dbReference type="Rhea" id="RHEA:60268"/>
        <dbReference type="Rhea" id="RHEA-COMP:15540"/>
        <dbReference type="Rhea" id="RHEA-COMP:15543"/>
        <dbReference type="ChEBI" id="CHEBI:15378"/>
        <dbReference type="ChEBI" id="CHEBI:57856"/>
        <dbReference type="ChEBI" id="CHEBI:59789"/>
        <dbReference type="ChEBI" id="CHEBI:61929"/>
        <dbReference type="ChEBI" id="CHEBI:61976"/>
    </reaction>
    <physiologicalReaction direction="left-to-right" evidence="30">
        <dbReference type="Rhea" id="RHEA:60269"/>
    </physiologicalReaction>
</comment>
<comment type="subunit">
    <text evidence="12 13 14 15 16 17 18 19 21">Component of the menin-associated histone methyltransferase complex, at least composed of KMT2B/MLL4, ASH2L, RBBP5, WDR5, DPY30, MEN1; the complex interacts with POLR2A and POLR2B via MEN1 (PubMed:14992727, PubMed:23508102). Interacts with NFE2 (PubMed:17707229). Interacts with KDM6B (PubMed:17825402). Interacts (via WIN motif) with WDR5 (PubMed:18840606, PubMed:22266653, PubMed:22665483). Interacts (via MBM motif) with MEN1 (PubMed:22327296). Forms a core complex with the evolutionary conserved subcomplex WRAD composed of WDR5, RBBP5, ASH2L/ASH2 and DPY30 subunits; WRAD differentially stimulates the methyltransferase activity (PubMed:25561738).</text>
</comment>
<comment type="interaction">
    <interactant intactId="EBI-765774">
        <id>Q9UMN6</id>
    </interactant>
    <interactant intactId="EBI-16130425">
        <id>Q9UBL3-3</id>
        <label>ASH2L</label>
    </interactant>
    <organismsDiffer>false</organismsDiffer>
    <experiments>2</experiments>
</comment>
<comment type="interaction">
    <interactant intactId="EBI-765774">
        <id>Q9UMN6</id>
    </interactant>
    <interactant intactId="EBI-389883">
        <id>P16333</id>
        <label>NCK1</label>
    </interactant>
    <organismsDiffer>false</organismsDiffer>
    <experiments>2</experiments>
</comment>
<comment type="interaction">
    <interactant intactId="EBI-765774">
        <id>Q9UMN6</id>
    </interactant>
    <interactant intactId="EBI-78670">
        <id>Q14686</id>
        <label>NCOA6</label>
    </interactant>
    <organismsDiffer>false</organismsDiffer>
    <experiments>5</experiments>
</comment>
<comment type="interaction">
    <interactant intactId="EBI-765774">
        <id>Q9UMN6</id>
    </interactant>
    <interactant intactId="EBI-540834">
        <id>P61964</id>
        <label>WDR5</label>
    </interactant>
    <organismsDiffer>false</organismsDiffer>
    <experiments>10</experiments>
</comment>
<comment type="subcellular location">
    <subcellularLocation>
        <location evidence="19">Nucleus</location>
    </subcellularLocation>
</comment>
<comment type="tissue specificity">
    <text evidence="23">Widely expressed. Highest levels in testis. Also found in brain with higher expression in the cerebellum than in any other region, bone marrow, heart, muscle, kidney, placenta, spleen, thymus, prostate, ovary, intestine, colon, peripheral blood lymphocytes and pancreas. Often amplified in pancreatic carcinomas.</text>
</comment>
<comment type="domain">
    <text evidence="25">The CXXC zinc finger mediates binding to DNA containing unmethylated cytidine-phosphate-guanosine (CpG) dinucleotides.</text>
</comment>
<comment type="disease" evidence="22 23 27">
    <disease id="DI-04935">
        <name>Dystonia 28, childhood-onset</name>
        <acronym>DYT28</acronym>
        <description>A form of dystonia, a disorder defined by the presence of sustained involuntary muscle contraction, often leading to abnormal postures. DYT28 is an autosomal dominant, progressive form characterized by onset in the first decade of life and variable severity. Dystonia begins focally in the lower limbs, resulting in gait difficulties, with later progression to other body regions, including the upper limbs, neck, and orofacial region.</description>
        <dbReference type="MIM" id="617284"/>
    </disease>
    <text>The disease is caused by variants affecting the gene represented in this entry.</text>
</comment>
<comment type="disease" evidence="24 27">
    <disease id="DI-06462">
        <name>Intellectual developmental disorder, autosomal dominant 68</name>
        <acronym>MRD68</acronym>
        <description>An autosomal dominant disorder characterized by developmental delay, intellectual disability, microcephaly, poor growth, feeding difficulties, and dysmorphic features. Some patients may have autism spectrum disorder or attention deficit-hyperactivity disorder.</description>
        <dbReference type="MIM" id="619934"/>
    </disease>
    <text>The disease is caused by variants affecting the gene represented in this entry.</text>
</comment>
<comment type="similarity">
    <text evidence="6">Belongs to the class V-like SAM-binding methyltransferase superfamily. Histone-lysine methyltransferase family. TRX/MLL subfamily.</text>
</comment>
<comment type="caution">
    <text evidence="28">This protein was first named MLL2 by PubMed:10637508 and PubMed:10409430. MLL2 corresponds to another protein located on chromosome 12 (see AC O14686). Thus, KMT2B/MLL4 is often referred to as MLL2 and vice versa in the literature.</text>
</comment>
<comment type="sequence caution" evidence="28">
    <conflict type="miscellaneous discrepancy">
        <sequence resource="EMBL-CDS" id="AAD26113"/>
    </conflict>
    <text>Probably cloning artifact.</text>
</comment>
<name>KMT2B_HUMAN</name>
<organism>
    <name type="scientific">Homo sapiens</name>
    <name type="common">Human</name>
    <dbReference type="NCBI Taxonomy" id="9606"/>
    <lineage>
        <taxon>Eukaryota</taxon>
        <taxon>Metazoa</taxon>
        <taxon>Chordata</taxon>
        <taxon>Craniata</taxon>
        <taxon>Vertebrata</taxon>
        <taxon>Euteleostomi</taxon>
        <taxon>Mammalia</taxon>
        <taxon>Eutheria</taxon>
        <taxon>Euarchontoglires</taxon>
        <taxon>Primates</taxon>
        <taxon>Haplorrhini</taxon>
        <taxon>Catarrhini</taxon>
        <taxon>Hominidae</taxon>
        <taxon>Homo</taxon>
    </lineage>
</organism>
<sequence>MAAAAGGGSCPGPGSARGRFPGRPRGAGGGGGRGGRGNGAERVRVALRRGGGATGPGGAEPGEDTALLRLLGLRRGLRRLRRLWAGPRVQRGRGRGRGRGWGPSRGCVPEEESSDGESDEEEFQGFHSDEDVAPSSLRSALRSQRGRAPRGRGRKHKTTPLPPPRLADVAPTPPKTPARKRGEEGTERMVQALTELLRRAQAPQAPRSRACEPSTPRRSRGRPPGRPAGPCRRKQQAVVVAEAAVTIPKPEPPPPVVPVKHQTGSWKCKEGPGPGPGTPRRGGQSSRGGRGGRGRGRGGGLPFVIKFVSRAKKVKMGQLSLGLESGQGQGQHEESWQDVPQRRVGSGQGGSPCWKKQEQKLDDEEEEKKEEEEKDKEGEEKEERAVAEEMMPAAEKEEAKLPPPPLTPPAPSPPPPLPPPSTSPPPPLCPPPPPPVSPPPLPSPPPPPAQEEQEESPPPVVPATCSRKRGRPPLTPSQRAEREAARAGPEGTSPPTPTPSTATGGPPEDSPTVAPKSTTFLKNIRQFIMPVVSARSSRVIKTPRRFMDEDPPKPPKVEVSPVLRPPITTSPPVPQEPAPVPSPPRAPTPPSTPVPLPEKRRSILREPTFRWTSLTRELPPPPPAPPPPPAPSPPPAPATSSRRPLLLRAPQFTPSEAHLKIYESVLTPPPLGAPEAPEPEPPPADDSPAEPEPRAVGRTNHLSLPRFAPVVTTPVKAEVSPHGAPALSNGPQTQAQLLQPLQALQTQLLPQALPPPQPQLQPPPSPQQMPPLEKARIAGVGSLPLSGVEEKMFSLLKRAKVQLFKIDQQQQQKVAASMPLSPGGQMEEVAGAVKQISDRGPVRSEDESVEAKRERPSGPESPVQGPRIKHVCRHAAVALGQARAMVPEDVPRLSALPLRDRQDLATEDTSSASETESVPSRSRRGKVEAAGPGGESEPTGSGGTLAHTPRRSLPSHHGKKMRMARCGHCRGCLRVQDCGSCVNCLDKPKFGGPNTKKQCCVYRKCDKIEARKMERLAKKGRTIVKTLLPWDSDESPEASPGPPGPRRGAGAGGPREEVVAHPGPEEQDSLLQRKSARRCVKQRPSYDIFEDSDDSEPGGPPAPRRRTPRENELPLPEPEEQSRPRKPTLQPVLQLKARRRLDKDALAPGPFASFPNGWTGKQKSPDGVHRVRVDFKEDCDLENVWLMGGLSVLTSVPGGPPMVCLLCASKGLHELVFCQVCCDPFHPFCLEEAERPLPQHHDTWCCRRCKFCHVCGRKGRGSKHLLECERCRHAYHPACLGPSYPTRATRKRRHWICSACVRCKSCGATPGKNWDVEWSGDYSLCPRCTQLYEKGNYCPICTRCYEDNDYESKMMQCAQCDHWVHAKCEGLSDEDYEILSGLPDSVLYTCGPCAGAAQPRWREALSGALQGGLRQVLQGLLSSKVVGPLLLCTQCGPDGKQLHPGPCGLQAVSQRFEDGHYKSVHSFMEDMVGILMRHSEEGETPDRRAGGQMKGLLLKLLESAFGWFDAHDPKYWRRSTRLPNGVLPNAVLPPSLDHVYAQWRQQEPETPESGQPPGDPSAAFQGKDPAAFSHLEDPRQCALCLKYGDADSKEAGRLLYIGQNEWTHVNCAIWSAEVFEENDGSLKNVHAAVARGRQMRCELCLKPGATVGCCLSSCLSNFHFMCARASYCIFQDDKKVFCQKHTDLLDGKEIVNPDGFDVLRRVYVDFEGINFKRKFLTGLEPDAINVLIGSIRIDSLGTLSDLSDCEGRLFPIGYQCSRLYWSTVDARRRCWYRCRILEYRPWGPREEPAHLEAAEENQTIVHSPAPSSEPPGGEDPPLDTDVLVPGAPERHSPIQNLDPPLRPDSGSAPPPAPRSFSGARIKVPNYSPSRRPLGGVSFGPLPSPGSPSSLTHHIPTVGDPDFPAPPRRSRRPSPLAPRPPPSRWASPPLKTSPQLRVPPPTSVVTALTPTSGELAPPGPAPSPPPPEDLGPDFEDMEVVSGLSAADLDFAASLLGTEPFQEEIVAAGAMGSSHGGPGDSSEEESSPTSRYIHFPVTVVSAPGLAPSATPGAPRIEQLDGVDDGTDSEAEAVQQPRGQGTPPSGPGVVRAGVLGAAGDRARPPEDLPSEIVDFVLKNLGGPGDGGAGPREESLPPAPPLANGSQPSQGLTASPADPTRTFAWLPGAPGVRVLSLGPAPEPPKPATSKIILVNKLGQVFVKMAGEGEPVPPPVKQPPLPPTISPTAPTSWTLPPGPLLGVLPVVGVVRPAPPPPPPPLTLVLSSGPASPPRQAIRVKRVSTFSGRSPPAPPPYKAPRLDEDGEASEDTPQVPGLGSGGFSRVRMKTPTVRGVLDLDRPGEPAGEESPGPLQERSPLLPLPEDGPPQVPDGPPDLLLESQWHHYSGEASSSEEEPPSPDDKENQAPKRTGPHLRFEISSEDGFSVEAESLEGAWRTLIEKVQEARGHARLRHLSFSGMSGARLLGIHHDAVIFLAEQLPGAQRCQHYKFRYHQQGEGQEEPPLNPHGAARAEVYLRKCTFDMFNFLASQHRVLPEGATCDEEEDEVQLRSTRRATSLELPMAMRFRHLKKTSKEAVGVYRSAIHGRGLFCKRNIDAGEMVIEYSGIVIRSVLTDKREKFYDGKGIGCYMFRMDDFDVVDATMHGNAARFINHSCEPNCFSRVIHVEGQKHIVIFALRRILRGEELTYDYKFPIEDASNKLPCNCGAKRCRRFLN</sequence>
<keyword id="KW-0002">3D-structure</keyword>
<keyword id="KW-0007">Acetylation</keyword>
<keyword id="KW-0103">Bromodomain</keyword>
<keyword id="KW-0156">Chromatin regulator</keyword>
<keyword id="KW-0225">Disease variant</keyword>
<keyword id="KW-0238">DNA-binding</keyword>
<keyword id="KW-1023">Dystonia</keyword>
<keyword id="KW-0991">Intellectual disability</keyword>
<keyword id="KW-1017">Isopeptide bond</keyword>
<keyword id="KW-0479">Metal-binding</keyword>
<keyword id="KW-0489">Methyltransferase</keyword>
<keyword id="KW-0539">Nucleus</keyword>
<keyword id="KW-0597">Phosphoprotein</keyword>
<keyword id="KW-1267">Proteomics identification</keyword>
<keyword id="KW-1185">Reference proteome</keyword>
<keyword id="KW-0677">Repeat</keyword>
<keyword id="KW-0949">S-adenosyl-L-methionine</keyword>
<keyword id="KW-0804">Transcription</keyword>
<keyword id="KW-0805">Transcription regulation</keyword>
<keyword id="KW-0808">Transferase</keyword>
<keyword id="KW-0832">Ubl conjugation</keyword>
<keyword id="KW-0862">Zinc</keyword>
<keyword id="KW-0863">Zinc-finger</keyword>
<accession>Q9UMN6</accession>
<accession>O15022</accession>
<accession>O95836</accession>
<accession>Q96GP2</accession>
<accession>Q96IP3</accession>
<accession>Q9UK25</accession>
<accession>Q9Y668</accession>
<accession>Q9Y669</accession>
<proteinExistence type="evidence at protein level"/>
<reference key="1">
    <citation type="submission" date="1998-06" db="EMBL/GenBank/DDBJ databases">
        <title>Mammalian trithorax- and ASH1-like proteins: putative chromatin regulators which contain PHD fingers and SET domains.</title>
        <authorList>
            <person name="Angrand P.-O."/>
            <person name="Valvatne H."/>
            <person name="Jeanmougin F."/>
            <person name="Adamson A."/>
            <person name="van der Hoeven F."/>
            <person name="Olsen L."/>
            <person name="Tekotte H."/>
            <person name="Huang N."/>
            <person name="Poch O."/>
            <person name="Lamerdin J."/>
            <person name="Chambon P."/>
            <person name="Losson R."/>
            <person name="Stewart A."/>
            <person name="Aasland R."/>
        </authorList>
    </citation>
    <scope>NUCLEOTIDE SEQUENCE [MRNA]</scope>
</reference>
<reference key="2">
    <citation type="journal article" date="2004" name="Nature">
        <title>The DNA sequence and biology of human chromosome 19.</title>
        <authorList>
            <person name="Grimwood J."/>
            <person name="Gordon L.A."/>
            <person name="Olsen A.S."/>
            <person name="Terry A."/>
            <person name="Schmutz J."/>
            <person name="Lamerdin J.E."/>
            <person name="Hellsten U."/>
            <person name="Goodstein D."/>
            <person name="Couronne O."/>
            <person name="Tran-Gyamfi M."/>
            <person name="Aerts A."/>
            <person name="Altherr M."/>
            <person name="Ashworth L."/>
            <person name="Bajorek E."/>
            <person name="Black S."/>
            <person name="Branscomb E."/>
            <person name="Caenepeel S."/>
            <person name="Carrano A.V."/>
            <person name="Caoile C."/>
            <person name="Chan Y.M."/>
            <person name="Christensen M."/>
            <person name="Cleland C.A."/>
            <person name="Copeland A."/>
            <person name="Dalin E."/>
            <person name="Dehal P."/>
            <person name="Denys M."/>
            <person name="Detter J.C."/>
            <person name="Escobar J."/>
            <person name="Flowers D."/>
            <person name="Fotopulos D."/>
            <person name="Garcia C."/>
            <person name="Georgescu A.M."/>
            <person name="Glavina T."/>
            <person name="Gomez M."/>
            <person name="Gonzales E."/>
            <person name="Groza M."/>
            <person name="Hammon N."/>
            <person name="Hawkins T."/>
            <person name="Haydu L."/>
            <person name="Ho I."/>
            <person name="Huang W."/>
            <person name="Israni S."/>
            <person name="Jett J."/>
            <person name="Kadner K."/>
            <person name="Kimball H."/>
            <person name="Kobayashi A."/>
            <person name="Larionov V."/>
            <person name="Leem S.-H."/>
            <person name="Lopez F."/>
            <person name="Lou Y."/>
            <person name="Lowry S."/>
            <person name="Malfatti S."/>
            <person name="Martinez D."/>
            <person name="McCready P.M."/>
            <person name="Medina C."/>
            <person name="Morgan J."/>
            <person name="Nelson K."/>
            <person name="Nolan M."/>
            <person name="Ovcharenko I."/>
            <person name="Pitluck S."/>
            <person name="Pollard M."/>
            <person name="Popkie A.P."/>
            <person name="Predki P."/>
            <person name="Quan G."/>
            <person name="Ramirez L."/>
            <person name="Rash S."/>
            <person name="Retterer J."/>
            <person name="Rodriguez A."/>
            <person name="Rogers S."/>
            <person name="Salamov A."/>
            <person name="Salazar A."/>
            <person name="She X."/>
            <person name="Smith D."/>
            <person name="Slezak T."/>
            <person name="Solovyev V."/>
            <person name="Thayer N."/>
            <person name="Tice H."/>
            <person name="Tsai M."/>
            <person name="Ustaszewska A."/>
            <person name="Vo N."/>
            <person name="Wagner M."/>
            <person name="Wheeler J."/>
            <person name="Wu K."/>
            <person name="Xie G."/>
            <person name="Yang J."/>
            <person name="Dubchak I."/>
            <person name="Furey T.S."/>
            <person name="DeJong P."/>
            <person name="Dickson M."/>
            <person name="Gordon D."/>
            <person name="Eichler E.E."/>
            <person name="Pennacchio L.A."/>
            <person name="Richardson P."/>
            <person name="Stubbs L."/>
            <person name="Rokhsar D.S."/>
            <person name="Myers R.M."/>
            <person name="Rubin E.M."/>
            <person name="Lucas S.M."/>
        </authorList>
    </citation>
    <scope>NUCLEOTIDE SEQUENCE [LARGE SCALE GENOMIC DNA]</scope>
</reference>
<reference key="3">
    <citation type="journal article" date="1999" name="Oncogene">
        <title>MLL2, the second human homolog of the Drosophila trithorax gene, maps to 19q13.1 and is amplified in solid tumor cell lines.</title>
        <authorList>
            <person name="Huntsman D.G."/>
            <person name="Chin S.-F."/>
            <person name="Muleris M."/>
            <person name="Batley S.J."/>
            <person name="Collins V.P."/>
            <person name="Wiedemann L.M."/>
            <person name="Aparicio S."/>
            <person name="Caldas C."/>
        </authorList>
    </citation>
    <scope>NUCLEOTIDE SEQUENCE [MRNA] OF 111-2715</scope>
    <source>
        <tissue>Leukocyte</tissue>
        <tissue>Testis</tissue>
    </source>
</reference>
<reference key="4">
    <citation type="journal article" date="1997" name="DNA Res.">
        <title>Prediction of the coding sequences of unidentified human genes. VII. The complete sequences of 100 new cDNA clones from brain which can code for large proteins in vitro.</title>
        <authorList>
            <person name="Nagase T."/>
            <person name="Ishikawa K."/>
            <person name="Nakajima D."/>
            <person name="Ohira M."/>
            <person name="Seki N."/>
            <person name="Miyajima N."/>
            <person name="Tanaka A."/>
            <person name="Kotani H."/>
            <person name="Nomura N."/>
            <person name="Ohara O."/>
        </authorList>
    </citation>
    <scope>NUCLEOTIDE SEQUENCE [LARGE SCALE MRNA] OF 301-2715</scope>
    <source>
        <tissue>Brain</tissue>
    </source>
</reference>
<reference key="5">
    <citation type="journal article" date="2004" name="Genome Res.">
        <title>The status, quality, and expansion of the NIH full-length cDNA project: the Mammalian Gene Collection (MGC).</title>
        <authorList>
            <consortium name="The MGC Project Team"/>
        </authorList>
    </citation>
    <scope>NUCLEOTIDE SEQUENCE [LARGE SCALE MRNA] OF 1918-2715</scope>
    <source>
        <tissue>Brain</tissue>
        <tissue>Skin</tissue>
    </source>
</reference>
<reference key="6">
    <citation type="journal article" date="1999" name="Genomics">
        <title>MLL2: a new mammalian member of the trx/MLL family of genes.</title>
        <authorList>
            <person name="FitzGerald K.T."/>
            <person name="Diaz M.O."/>
        </authorList>
    </citation>
    <scope>PARTIAL NUCLEOTIDE SEQUENCE [MRNA]</scope>
    <source>
        <tissue>Bone marrow</tissue>
        <tissue>Placenta</tissue>
    </source>
</reference>
<reference key="7">
    <citation type="journal article" date="2004" name="Mol. Cell">
        <title>Menin associates with a trithorax family histone methyltransferase complex and with the hoxc8 locus.</title>
        <authorList>
            <person name="Hughes C.M."/>
            <person name="Rozenblatt-Rosen O."/>
            <person name="Milne T.A."/>
            <person name="Copeland T.D."/>
            <person name="Levine S.S."/>
            <person name="Lee J.C."/>
            <person name="Hayes D.N."/>
            <person name="Shanmugam K.S."/>
            <person name="Bhattacharjee A."/>
            <person name="Biondi C.A."/>
            <person name="Kay G.F."/>
            <person name="Hayward N.K."/>
            <person name="Hess J.L."/>
            <person name="Meyerson M."/>
        </authorList>
    </citation>
    <scope>IDENTIFICATION IN THE MEN1-ASSOCIATED HISTONE METHYLTRANSFERASE COMPLEX</scope>
    <scope>INTERACTION OF THE COMPLEX WITH POLR2A AND POLR2B</scope>
</reference>
<reference key="8">
    <citation type="journal article" date="2007" name="Cell">
        <title>The histone H3 lysine-27 demethylase Jmjd3 links inflammation to inhibition of polycomb-mediated gene silencing.</title>
        <authorList>
            <person name="De Santa F."/>
            <person name="Totaro M.G."/>
            <person name="Prosperini E."/>
            <person name="Notarbartolo S."/>
            <person name="Testa G."/>
            <person name="Natoli G."/>
        </authorList>
    </citation>
    <scope>INTERACTION WITH KDM6B</scope>
</reference>
<reference key="9">
    <citation type="journal article" date="2007" name="Mol. Cell">
        <title>Activator-mediated recruitment of the MLL2 methyltransferase complex to the beta-globin locus.</title>
        <authorList>
            <person name="Demers C."/>
            <person name="Chaturvedi C.-P."/>
            <person name="Ranish J.A."/>
            <person name="Juban G."/>
            <person name="Lai P."/>
            <person name="Morle F."/>
            <person name="Aebersold R."/>
            <person name="Dilworth F.J."/>
            <person name="Groudine M."/>
            <person name="Brand M."/>
        </authorList>
    </citation>
    <scope>FUNCTION</scope>
    <scope>INTERACTION WITH NFE2</scope>
</reference>
<reference key="10">
    <citation type="journal article" date="2008" name="J. Biol. Chem.">
        <title>WDR5 interacts with mixed lineage leukemia (MLL) protein via the histone H3-binding pocket.</title>
        <authorList>
            <person name="Song J.J."/>
            <person name="Kingston R.E."/>
        </authorList>
    </citation>
    <scope>INTERACTION WITH WDR5</scope>
</reference>
<reference key="11">
    <citation type="journal article" date="2008" name="Proc. Natl. Acad. Sci. U.S.A.">
        <title>A quantitative atlas of mitotic phosphorylation.</title>
        <authorList>
            <person name="Dephoure N."/>
            <person name="Zhou C."/>
            <person name="Villen J."/>
            <person name="Beausoleil S.A."/>
            <person name="Bakalarski C.E."/>
            <person name="Elledge S.J."/>
            <person name="Gygi S.P."/>
        </authorList>
    </citation>
    <scope>PHOSPHORYLATION [LARGE SCALE ANALYSIS] AT SER-821; SER-844; SER-1032; SER-1035 AND SER-1930</scope>
    <scope>IDENTIFICATION BY MASS SPECTROMETRY [LARGE SCALE ANALYSIS]</scope>
    <source>
        <tissue>Cervix carcinoma</tissue>
    </source>
</reference>
<reference key="12">
    <citation type="journal article" date="2009" name="Anal. Chem.">
        <title>Lys-N and trypsin cover complementary parts of the phosphoproteome in a refined SCX-based approach.</title>
        <authorList>
            <person name="Gauci S."/>
            <person name="Helbig A.O."/>
            <person name="Slijper M."/>
            <person name="Krijgsveld J."/>
            <person name="Heck A.J."/>
            <person name="Mohammed S."/>
        </authorList>
    </citation>
    <scope>ACETYLATION [LARGE SCALE ANALYSIS] AT ALA-2</scope>
    <scope>CLEAVAGE OF INITIATOR METHIONINE [LARGE SCALE ANALYSIS]</scope>
    <scope>IDENTIFICATION BY MASS SPECTROMETRY [LARGE SCALE ANALYSIS]</scope>
</reference>
<reference key="13">
    <citation type="journal article" date="2009" name="Sci. Signal.">
        <title>Quantitative phosphoproteomic analysis of T cell receptor signaling reveals system-wide modulation of protein-protein interactions.</title>
        <authorList>
            <person name="Mayya V."/>
            <person name="Lundgren D.H."/>
            <person name="Hwang S.-I."/>
            <person name="Rezaul K."/>
            <person name="Wu L."/>
            <person name="Eng J.K."/>
            <person name="Rodionov V."/>
            <person name="Han D.K."/>
        </authorList>
    </citation>
    <scope>PHOSPHORYLATION [LARGE SCALE ANALYSIS] AT THR-2068 AND THR-2083</scope>
    <scope>IDENTIFICATION BY MASS SPECTROMETRY [LARGE SCALE ANALYSIS]</scope>
    <source>
        <tissue>Leukemic T-cell</tissue>
    </source>
</reference>
<reference key="14">
    <citation type="journal article" date="2010" name="Sci. Signal.">
        <title>Quantitative phosphoproteomics reveals widespread full phosphorylation site occupancy during mitosis.</title>
        <authorList>
            <person name="Olsen J.V."/>
            <person name="Vermeulen M."/>
            <person name="Santamaria A."/>
            <person name="Kumar C."/>
            <person name="Miller M.L."/>
            <person name="Jensen L.J."/>
            <person name="Gnad F."/>
            <person name="Cox J."/>
            <person name="Jensen T.S."/>
            <person name="Nigg E.A."/>
            <person name="Brunak S."/>
            <person name="Mann M."/>
        </authorList>
    </citation>
    <scope>PHOSPHORYLATION [LARGE SCALE ANALYSIS] AT SER-821</scope>
    <scope>IDENTIFICATION BY MASS SPECTROMETRY [LARGE SCALE ANALYSIS]</scope>
    <source>
        <tissue>Cervix carcinoma</tissue>
    </source>
</reference>
<reference key="15">
    <citation type="journal article" date="2011" name="Sci. Signal.">
        <title>System-wide temporal characterization of the proteome and phosphoproteome of human embryonic stem cell differentiation.</title>
        <authorList>
            <person name="Rigbolt K.T."/>
            <person name="Prokhorova T.A."/>
            <person name="Akimov V."/>
            <person name="Henningsen J."/>
            <person name="Johansen P.T."/>
            <person name="Kratchmarova I."/>
            <person name="Kassem M."/>
            <person name="Mann M."/>
            <person name="Olsen J.V."/>
            <person name="Blagoev B."/>
        </authorList>
    </citation>
    <scope>PHOSPHORYLATION [LARGE SCALE ANALYSIS] AT SER-861</scope>
    <scope>IDENTIFICATION BY MASS SPECTROMETRY [LARGE SCALE ANALYSIS]</scope>
</reference>
<reference key="16">
    <citation type="journal article" date="2012" name="Nature">
        <title>The same pocket in menin binds both MLL and JUND but has opposite effects on transcription.</title>
        <authorList>
            <person name="Huang J."/>
            <person name="Gurung B."/>
            <person name="Wan B."/>
            <person name="Matkar S."/>
            <person name="Veniaminova N.A."/>
            <person name="Wan K."/>
            <person name="Merchant J.L."/>
            <person name="Hua X."/>
            <person name="Lei M."/>
        </authorList>
    </citation>
    <scope>INTERACTION WITH MEN1</scope>
</reference>
<reference key="17">
    <citation type="journal article" date="2013" name="J. Proteome Res.">
        <title>Toward a comprehensive characterization of a human cancer cell phosphoproteome.</title>
        <authorList>
            <person name="Zhou H."/>
            <person name="Di Palma S."/>
            <person name="Preisinger C."/>
            <person name="Peng M."/>
            <person name="Polat A.N."/>
            <person name="Heck A.J."/>
            <person name="Mohammed S."/>
        </authorList>
    </citation>
    <scope>PHOSPHORYLATION [LARGE SCALE ANALYSIS] AT SER-351; SER-821; SER-844; SER-861; SER-936; SER-1092; SER-1095; SER-1936; THR-2083; SER-2288 AND SER-2348</scope>
    <scope>IDENTIFICATION BY MASS SPECTROMETRY [LARGE SCALE ANALYSIS]</scope>
    <source>
        <tissue>Cervix carcinoma</tissue>
        <tissue>Erythroleukemia</tissue>
    </source>
</reference>
<reference key="18">
    <citation type="journal article" date="2013" name="Mol. Cell. Biol.">
        <title>Quantitative dissection and stoichiometry determination of the human SET1/MLL histone methyltransferase complexes.</title>
        <authorList>
            <person name="van Nuland R."/>
            <person name="Smits A.H."/>
            <person name="Pallaki P."/>
            <person name="Jansen P.W."/>
            <person name="Vermeulen M."/>
            <person name="Timmers H.T."/>
        </authorList>
    </citation>
    <scope>IDENTIFICATION IN MLL4 COMPLEX</scope>
    <scope>SUBCELLULAR LOCATION</scope>
</reference>
<reference key="19">
    <citation type="journal article" date="2013" name="Mol. Cell. Biol.">
        <title>The MLL3/MLL4 branches of the COMPASS family function as major histone H3K4 monomethylases at enhancers.</title>
        <authorList>
            <person name="Hu D."/>
            <person name="Gao X."/>
            <person name="Morgan M.A."/>
            <person name="Herz H.M."/>
            <person name="Smith E.R."/>
            <person name="Shilatifard A."/>
        </authorList>
    </citation>
    <scope>FUNCTION</scope>
    <scope>CATALYTIC ACTIVITY</scope>
</reference>
<reference key="20">
    <citation type="journal article" date="2014" name="J. Proteomics">
        <title>An enzyme assisted RP-RPLC approach for in-depth analysis of human liver phosphoproteome.</title>
        <authorList>
            <person name="Bian Y."/>
            <person name="Song C."/>
            <person name="Cheng K."/>
            <person name="Dong M."/>
            <person name="Wang F."/>
            <person name="Huang J."/>
            <person name="Sun D."/>
            <person name="Wang L."/>
            <person name="Ye M."/>
            <person name="Zou H."/>
        </authorList>
    </citation>
    <scope>PHOSPHORYLATION [LARGE SCALE ANALYSIS] AT SER-861 AND THR-2083</scope>
    <scope>IDENTIFICATION BY MASS SPECTROMETRY [LARGE SCALE ANALYSIS]</scope>
    <source>
        <tissue>Liver</tissue>
    </source>
</reference>
<reference key="21">
    <citation type="journal article" date="2015" name="J. Biol. Chem.">
        <title>Biochemical reconstitution and phylogenetic comparison of human SET1 family core complexes involved in histone methylation.</title>
        <authorList>
            <person name="Shinsky S.A."/>
            <person name="Monteith K.E."/>
            <person name="Viggiano S."/>
            <person name="Cosgrove M.S."/>
        </authorList>
    </citation>
    <scope>FUNCTION</scope>
    <scope>CATALYTIC ACTIVITY</scope>
    <scope>SUBUNIT</scope>
    <scope>MUTAGENESIS OF ASN-2652</scope>
</reference>
<reference key="22">
    <citation type="journal article" date="2016" name="Am. J. Hum. Genet.">
        <title>Haploinsufficiency of KMT2B, encoding the lysine-specific histone methyltransferase 2B, results in early-onset generalized dystonia.</title>
        <authorList>
            <person name="Zech M."/>
            <person name="Boesch S."/>
            <person name="Maier E.M."/>
            <person name="Borggraefe I."/>
            <person name="Vill K."/>
            <person name="Laccone F."/>
            <person name="Pilshofer V."/>
            <person name="Ceballos-Baumann A."/>
            <person name="Alhaddad B."/>
            <person name="Berutti R."/>
            <person name="Poewe W."/>
            <person name="Haack T.B."/>
            <person name="Haslinger B."/>
            <person name="Strom T.M."/>
            <person name="Winkelmann J."/>
        </authorList>
    </citation>
    <scope>INVOLVEMENT IN DYT28</scope>
    <scope>VARIANTS DYT28 545-ARG--ASN-2715 DEL AND 810-GLN--ASN-2715 DEL</scope>
</reference>
<reference key="23">
    <citation type="journal article" date="2017" name="Nat. Genet.">
        <title>Mutations in the histone methyltransferase gene KMT2B cause complex early-onset dystonia.</title>
        <authorList>
            <consortium name="UK10K Consortium"/>
            <consortium name="Deciphering Developmental Disorders Study"/>
            <consortium name="NIHR BioResource Rare Diseases Consortium"/>
            <person name="Meyer E."/>
            <person name="Carss K.J."/>
            <person name="Rankin J."/>
            <person name="Nichols J.M."/>
            <person name="Grozeva D."/>
            <person name="Joseph A.P."/>
            <person name="Mencacci N.E."/>
            <person name="Papandreou A."/>
            <person name="Ng J."/>
            <person name="Barral S."/>
            <person name="Ngoh A."/>
            <person name="Ben-Pazi H."/>
            <person name="Willemsen M.A."/>
            <person name="Arkadir D."/>
            <person name="Barnicoat A."/>
            <person name="Bergman H."/>
            <person name="Bhate S."/>
            <person name="Boys A."/>
            <person name="Darin N."/>
            <person name="Foulds N."/>
            <person name="Gutowski N."/>
            <person name="Hills A."/>
            <person name="Houlden H."/>
            <person name="Hurst J.A."/>
            <person name="Israel Z."/>
            <person name="Kaminska M."/>
            <person name="Limousin P."/>
            <person name="Lumsden D."/>
            <person name="McKee S."/>
            <person name="Misra S."/>
            <person name="Mohammed S.S."/>
            <person name="Nakou V."/>
            <person name="Nicolai J."/>
            <person name="Nilsson M."/>
            <person name="Pall H."/>
            <person name="Peall K.J."/>
            <person name="Peters G.B."/>
            <person name="Prabhakar P."/>
            <person name="Reuter M.S."/>
            <person name="Rump P."/>
            <person name="Segel R."/>
            <person name="Sinnema M."/>
            <person name="Smith M."/>
            <person name="Turnpenny P."/>
            <person name="White S.M."/>
            <person name="Wieczorek D."/>
            <person name="Wiethoff S."/>
            <person name="Wilson B.T."/>
            <person name="Winter G."/>
            <person name="Wragg C."/>
            <person name="Pope S."/>
            <person name="Heales S.J."/>
            <person name="Morrogh D."/>
            <person name="Pittman A."/>
            <person name="Carr L.J."/>
            <person name="Perez-Duenas B."/>
            <person name="Lin J.P."/>
            <person name="Reis A."/>
            <person name="Gahl W.A."/>
            <person name="Toro C."/>
            <person name="Bhatia K.P."/>
            <person name="Wood N.W."/>
            <person name="Kamsteeg E.J."/>
            <person name="Chong W.K."/>
            <person name="Gissen P."/>
            <person name="Topf M."/>
            <person name="Dale R.C."/>
            <person name="Chubb J.R."/>
            <person name="Raymond F.L."/>
            <person name="Kurian M.A."/>
        </authorList>
    </citation>
    <scope>INVOLVEMENT IN DYT28</scope>
    <scope>TISSUE SPECIFICITY</scope>
    <scope>VARIANTS DYT28 564-ARG--ASN-2715 DEL; 1515-TYR--ASN-2715 DEL; ASP-1652; LEU-1662; GLN-1705; CYS-1762; PRO-1781; TRP-2517 AND THR-2674</scope>
</reference>
<reference key="24">
    <citation type="journal article" date="2017" name="Nat. Struct. Mol. Biol.">
        <title>Site-specific mapping of the human SUMO proteome reveals co-modification with phosphorylation.</title>
        <authorList>
            <person name="Hendriks I.A."/>
            <person name="Lyon D."/>
            <person name="Young C."/>
            <person name="Jensen L.J."/>
            <person name="Vertegaal A.C."/>
            <person name="Nielsen M.L."/>
        </authorList>
    </citation>
    <scope>SUMOYLATION [LARGE SCALE ANALYSIS] AT LYS-805 AND LYS-1136</scope>
    <scope>IDENTIFICATION BY MASS SPECTROMETRY [LARGE SCALE ANALYSIS]</scope>
</reference>
<reference key="25">
    <citation type="journal article" date="2018" name="Am. J. Hum. Genet.">
        <title>Histone lysine methylases and demethylases in the landscape of human developmental disorders.</title>
        <authorList>
            <consortium name="Clinical Assessment of the Utility of Sequencing and Evaluation as a Service (CAUSES) Study"/>
            <consortium name="Deciphering Developmental Disorders (DDD) Study"/>
            <person name="Faundes V."/>
            <person name="Newman W.G."/>
            <person name="Bernardini L."/>
            <person name="Canham N."/>
            <person name="Clayton-Smith J."/>
            <person name="Dallapiccola B."/>
            <person name="Davies S.J."/>
            <person name="Demos M.K."/>
            <person name="Goldman A."/>
            <person name="Gill H."/>
            <person name="Horton R."/>
            <person name="Kerr B."/>
            <person name="Kumar D."/>
            <person name="Lehman A."/>
            <person name="McKee S."/>
            <person name="Morton J."/>
            <person name="Parker M.J."/>
            <person name="Rankin J."/>
            <person name="Robertson L."/>
            <person name="Temple I.K."/>
            <person name="Banka S."/>
        </authorList>
    </citation>
    <scope>INVOLVEMENT IN MRD68</scope>
</reference>
<reference evidence="32" key="26">
    <citation type="journal article" date="2012" name="J. Biol. Chem.">
        <title>Structural basis for WDR5 interaction (Win) motif recognition in human SET1 family histone methyltransferases.</title>
        <authorList>
            <person name="Dharmarajan V."/>
            <person name="Lee J.H."/>
            <person name="Patel A."/>
            <person name="Skalnik D.G."/>
            <person name="Cosgrove M.S."/>
        </authorList>
    </citation>
    <scope>X-RAY CRYSTALLOGRAPHY (1.75 ANGSTROMS) OF 2504-2517 IN COMPLEX WITH WDR5</scope>
    <scope>INTERACTION WITH WDR5</scope>
    <scope>MOTIF WIN</scope>
</reference>
<reference evidence="31" key="27">
    <citation type="journal article" date="2012" name="Nucleic Acids Res.">
        <title>The plasticity of WDR5 peptide-binding cleft enables the binding of the SET1 family of histone methyltransferases.</title>
        <authorList>
            <person name="Zhang P."/>
            <person name="Lee H."/>
            <person name="Brunzelle J.S."/>
            <person name="Couture J.F."/>
        </authorList>
    </citation>
    <scope>X-RAY CRYSTALLOGRAPHY (1.57 ANGSTROMS) OF 2508-2517 IN COMPLEX WITH WDR5</scope>
    <scope>INTERACTION WITH WDR5</scope>
    <scope>MOTIF WIN</scope>
</reference>
<reference evidence="33" key="28">
    <citation type="journal article" date="2018" name="Structure">
        <title>DNA Sequence Recognition of Human CXXC Domains and Their Structural Determinants.</title>
        <authorList>
            <person name="Xu C."/>
            <person name="Liu K."/>
            <person name="Lei M."/>
            <person name="Yang A."/>
            <person name="Li Y."/>
            <person name="Hughes T.R."/>
            <person name="Min J."/>
        </authorList>
    </citation>
    <scope>X-RAY CRYSTALLOGRAPHY (2.15 ANGSTROMS) OF 955-1020 IN COMPLEX WITH CPG DNA</scope>
    <scope>DOMAIN CXXC-TYPE ZINC-FINGER</scope>
    <scope>ZINC-BINDING</scope>
</reference>
<reference key="29">
    <citation type="journal article" date="2018" name="Am. J. Hum. Genet.">
        <title>Pathogenic Variants in Fucokinase Cause a Congenital Disorder of Glycosylation.</title>
        <authorList>
            <consortium name="Undiagnosed Diseases Network"/>
            <person name="Ng B.G."/>
            <person name="Rosenfeld J.A."/>
            <person name="Emrick L."/>
            <person name="Jain M."/>
            <person name="Burrage L.C."/>
            <person name="Lee B."/>
            <person name="Craigen W.J."/>
            <person name="Bearden D.R."/>
            <person name="Graham B.H."/>
            <person name="Freeze H.H."/>
        </authorList>
    </citation>
    <scope>VARIANT ASN-215</scope>
</reference>
<reference key="30">
    <citation type="journal article" date="2020" name="Brain">
        <title>KMT2B-related disorders: expansion of the phenotypic spectrum and long-term efficacy of deep brain stimulation.</title>
        <authorList>
            <consortium name="Deciphering Developmental Disorders Study"/>
            <consortium name="Genomics England Research Consortium"/>
            <consortium name="NIHR BioResource"/>
            <consortium name="Undiagnosed Diseases Network"/>
            <person name="Cif L."/>
            <person name="Demailly D."/>
            <person name="Lin J.P."/>
            <person name="Barwick K.E."/>
            <person name="Sa M."/>
            <person name="Abela L."/>
            <person name="Malhotra S."/>
            <person name="Chong W.K."/>
            <person name="Steel D."/>
            <person name="Sanchis-Juan A."/>
            <person name="Ngoh A."/>
            <person name="Trump N."/>
            <person name="Meyer E."/>
            <person name="Vasques X."/>
            <person name="Rankin J."/>
            <person name="Allain M.W."/>
            <person name="Applegate C.D."/>
            <person name="Attaripour Isfahani S."/>
            <person name="Baleine J."/>
            <person name="Balint B."/>
            <person name="Bassetti J.A."/>
            <person name="Baple E.L."/>
            <person name="Bhatia K.P."/>
            <person name="Blanchet C."/>
            <person name="Burglen L."/>
            <person name="Cambonie G."/>
            <person name="Seng E.C."/>
            <person name="Bastaraud S.C."/>
            <person name="Cyprien F."/>
            <person name="Coubes C."/>
            <person name="d'Hardemare V."/>
            <person name="Doja A."/>
            <person name="Dorison N."/>
            <person name="Doummar D."/>
            <person name="Dy-Hollins M.E."/>
            <person name="Farrelly E."/>
            <person name="Fitzpatrick D.R."/>
            <person name="Fearon C."/>
            <person name="Fieg E.L."/>
            <person name="Fogel B.L."/>
            <person name="Forman E.B."/>
            <person name="Fox R.G."/>
            <person name="Gahl W.A."/>
            <person name="Galosi S."/>
            <person name="Gonzalez V."/>
            <person name="Graves T.D."/>
            <person name="Gregory A."/>
            <person name="Hallett M."/>
            <person name="Hasegawa H."/>
            <person name="Hayflick S.J."/>
            <person name="Hamosh A."/>
            <person name="Hully M."/>
            <person name="Jansen S."/>
            <person name="Jeong S.Y."/>
            <person name="Krier J.B."/>
            <person name="Krystal S."/>
            <person name="Kumar K.R."/>
            <person name="Laurencin C."/>
            <person name="Lee H."/>
            <person name="Lesca G."/>
            <person name="Francois L.L."/>
            <person name="Lynch T."/>
            <person name="Mahant N."/>
            <person name="Martinez-Agosto J.A."/>
            <person name="Milesi C."/>
            <person name="Mills K.A."/>
            <person name="Mondain M."/>
            <person name="Morales-Briceno H."/>
            <person name="Ostergaard J.R."/>
            <person name="Pal S."/>
            <person name="Pallais J.C."/>
            <person name="Pavillard F."/>
            <person name="Perrigault P.F."/>
            <person name="Petersen A.K."/>
            <person name="Polo G."/>
            <person name="Poulen G."/>
            <person name="Rinne T."/>
            <person name="Roujeau T."/>
            <person name="Rogers C."/>
            <person name="Roubertie A."/>
            <person name="Sahagian M."/>
            <person name="Schaefer E."/>
            <person name="Selim L."/>
            <person name="Selway R."/>
            <person name="Sharma N."/>
            <person name="Signer R."/>
            <person name="Soldatos A.G."/>
            <person name="Stevenson D.A."/>
            <person name="Stewart F."/>
            <person name="Tchan M."/>
            <person name="Verma I.C."/>
            <person name="de Vries B.B.A."/>
            <person name="Wilson J.L."/>
            <person name="Wong D.A."/>
            <person name="Zaitoun R."/>
            <person name="Zhen D."/>
            <person name="Znaczko A."/>
            <person name="Dale R.C."/>
            <person name="de Gusmao C.M."/>
            <person name="Friedman J."/>
            <person name="Fung V.S.C."/>
            <person name="King M.D."/>
            <person name="Mohammad S.S."/>
            <person name="Rohena L."/>
            <person name="Waugh J.L."/>
            <person name="Toro C."/>
            <person name="Raymond F.L."/>
            <person name="Topf M."/>
            <person name="Coubes P."/>
            <person name="Gorman K.M."/>
            <person name="Kurian M.A."/>
        </authorList>
    </citation>
    <scope>VARIANTS MRD68 TYR-1222; 1295-TRP--ASN-2715 DEL; TRP-1597 AND TRP-1682</scope>
    <scope>VARIANT DYT28 284-GLN--ASN-2715 DEL</scope>
</reference>
<evidence type="ECO:0000250" key="1">
    <source>
        <dbReference type="UniProtKB" id="O08550"/>
    </source>
</evidence>
<evidence type="ECO:0000250" key="2">
    <source>
        <dbReference type="UniProtKB" id="Q03164"/>
    </source>
</evidence>
<evidence type="ECO:0000255" key="3">
    <source>
        <dbReference type="PROSITE-ProRule" id="PRU00035"/>
    </source>
</evidence>
<evidence type="ECO:0000255" key="4">
    <source>
        <dbReference type="PROSITE-ProRule" id="PRU00146"/>
    </source>
</evidence>
<evidence type="ECO:0000255" key="5">
    <source>
        <dbReference type="PROSITE-ProRule" id="PRU00155"/>
    </source>
</evidence>
<evidence type="ECO:0000255" key="6">
    <source>
        <dbReference type="PROSITE-ProRule" id="PRU00190"/>
    </source>
</evidence>
<evidence type="ECO:0000255" key="7">
    <source>
        <dbReference type="PROSITE-ProRule" id="PRU00509"/>
    </source>
</evidence>
<evidence type="ECO:0000255" key="8">
    <source>
        <dbReference type="PROSITE-ProRule" id="PRU00875"/>
    </source>
</evidence>
<evidence type="ECO:0000255" key="9">
    <source>
        <dbReference type="PROSITE-ProRule" id="PRU00876"/>
    </source>
</evidence>
<evidence type="ECO:0000255" key="10">
    <source>
        <dbReference type="PROSITE-ProRule" id="PRU01146"/>
    </source>
</evidence>
<evidence type="ECO:0000256" key="11">
    <source>
        <dbReference type="SAM" id="MobiDB-lite"/>
    </source>
</evidence>
<evidence type="ECO:0000269" key="12">
    <source>
    </source>
</evidence>
<evidence type="ECO:0000269" key="13">
    <source>
    </source>
</evidence>
<evidence type="ECO:0000269" key="14">
    <source>
    </source>
</evidence>
<evidence type="ECO:0000269" key="15">
    <source>
    </source>
</evidence>
<evidence type="ECO:0000269" key="16">
    <source>
    </source>
</evidence>
<evidence type="ECO:0000269" key="17">
    <source>
    </source>
</evidence>
<evidence type="ECO:0000269" key="18">
    <source>
    </source>
</evidence>
<evidence type="ECO:0000269" key="19">
    <source>
    </source>
</evidence>
<evidence type="ECO:0000269" key="20">
    <source>
    </source>
</evidence>
<evidence type="ECO:0000269" key="21">
    <source>
    </source>
</evidence>
<evidence type="ECO:0000269" key="22">
    <source>
    </source>
</evidence>
<evidence type="ECO:0000269" key="23">
    <source>
    </source>
</evidence>
<evidence type="ECO:0000269" key="24">
    <source>
    </source>
</evidence>
<evidence type="ECO:0000269" key="25">
    <source>
    </source>
</evidence>
<evidence type="ECO:0000269" key="26">
    <source>
    </source>
</evidence>
<evidence type="ECO:0000269" key="27">
    <source>
    </source>
</evidence>
<evidence type="ECO:0000305" key="28"/>
<evidence type="ECO:0000305" key="29">
    <source>
    </source>
</evidence>
<evidence type="ECO:0000305" key="30">
    <source>
    </source>
</evidence>
<evidence type="ECO:0007744" key="31">
    <source>
        <dbReference type="PDB" id="3UVM"/>
    </source>
</evidence>
<evidence type="ECO:0007744" key="32">
    <source>
        <dbReference type="PDB" id="4ERZ"/>
    </source>
</evidence>
<evidence type="ECO:0007744" key="33">
    <source>
        <dbReference type="PDB" id="4PZI"/>
    </source>
</evidence>
<evidence type="ECO:0007744" key="34">
    <source>
    </source>
</evidence>
<evidence type="ECO:0007744" key="35">
    <source>
    </source>
</evidence>
<evidence type="ECO:0007744" key="36">
    <source>
    </source>
</evidence>
<evidence type="ECO:0007744" key="37">
    <source>
    </source>
</evidence>
<evidence type="ECO:0007744" key="38">
    <source>
    </source>
</evidence>
<evidence type="ECO:0007744" key="39">
    <source>
    </source>
</evidence>
<evidence type="ECO:0007744" key="40">
    <source>
    </source>
</evidence>
<evidence type="ECO:0007744" key="41">
    <source>
    </source>
</evidence>
<evidence type="ECO:0007829" key="42">
    <source>
        <dbReference type="PDB" id="3UVM"/>
    </source>
</evidence>
<evidence type="ECO:0007829" key="43">
    <source>
        <dbReference type="PDB" id="4PZI"/>
    </source>
</evidence>
<evidence type="ECO:0007829" key="44">
    <source>
        <dbReference type="PDB" id="7BRE"/>
    </source>
</evidence>
<dbReference type="EC" id="2.1.1.364" evidence="21"/>
<dbReference type="EMBL" id="AJ007041">
    <property type="protein sequence ID" value="CAB45385.1"/>
    <property type="molecule type" value="mRNA"/>
</dbReference>
<dbReference type="EMBL" id="AD000671">
    <property type="status" value="NOT_ANNOTATED_CDS"/>
    <property type="molecule type" value="Genomic_DNA"/>
</dbReference>
<dbReference type="EMBL" id="AF186605">
    <property type="protein sequence ID" value="AAD56420.1"/>
    <property type="molecule type" value="mRNA"/>
</dbReference>
<dbReference type="EMBL" id="AB002302">
    <property type="protein sequence ID" value="BAA20763.3"/>
    <property type="molecule type" value="mRNA"/>
</dbReference>
<dbReference type="EMBL" id="BC009337">
    <property type="protein sequence ID" value="AAH09337.2"/>
    <property type="molecule type" value="mRNA"/>
</dbReference>
<dbReference type="EMBL" id="BC007353">
    <property type="protein sequence ID" value="AAH07353.3"/>
    <property type="molecule type" value="mRNA"/>
</dbReference>
<dbReference type="EMBL" id="AF104918">
    <property type="protein sequence ID" value="AAD17932.1"/>
    <property type="molecule type" value="mRNA"/>
</dbReference>
<dbReference type="EMBL" id="AF105279">
    <property type="protein sequence ID" value="AAD26113.1"/>
    <property type="status" value="ALT_SEQ"/>
    <property type="molecule type" value="mRNA"/>
</dbReference>
<dbReference type="EMBL" id="AF105280">
    <property type="protein sequence ID" value="AAD26112.1"/>
    <property type="molecule type" value="mRNA"/>
</dbReference>
<dbReference type="CCDS" id="CCDS46055.1"/>
<dbReference type="RefSeq" id="NP_055542.1">
    <property type="nucleotide sequence ID" value="NM_014727.3"/>
</dbReference>
<dbReference type="PDB" id="3UVM">
    <property type="method" value="X-ray"/>
    <property type="resolution" value="1.57 A"/>
    <property type="chains" value="B=2508-2517"/>
</dbReference>
<dbReference type="PDB" id="4ERZ">
    <property type="method" value="X-ray"/>
    <property type="resolution" value="1.75 A"/>
    <property type="chains" value="D/E/F=2504-2517"/>
</dbReference>
<dbReference type="PDB" id="4PZI">
    <property type="method" value="X-ray"/>
    <property type="resolution" value="2.15 A"/>
    <property type="chains" value="A=955-1020"/>
</dbReference>
<dbReference type="PDB" id="7BRE">
    <property type="method" value="X-ray"/>
    <property type="resolution" value="2.80 A"/>
    <property type="chains" value="B/E=2551-2715"/>
</dbReference>
<dbReference type="PDBsum" id="3UVM"/>
<dbReference type="PDBsum" id="4ERZ"/>
<dbReference type="PDBsum" id="4PZI"/>
<dbReference type="PDBsum" id="7BRE"/>
<dbReference type="SMR" id="Q9UMN6"/>
<dbReference type="BioGRID" id="115104">
    <property type="interactions" value="122"/>
</dbReference>
<dbReference type="ComplexPortal" id="CPX-7062">
    <property type="entry name" value="Histone-lysine N-methyltransferase complex, KMT2B variant"/>
</dbReference>
<dbReference type="CORUM" id="Q9UMN6"/>
<dbReference type="DIP" id="DIP-34598N"/>
<dbReference type="ELM" id="Q9UMN6"/>
<dbReference type="FunCoup" id="Q9UMN6">
    <property type="interactions" value="3199"/>
</dbReference>
<dbReference type="IntAct" id="Q9UMN6">
    <property type="interactions" value="74"/>
</dbReference>
<dbReference type="MINT" id="Q9UMN6"/>
<dbReference type="STRING" id="9606.ENSP00000398837"/>
<dbReference type="BindingDB" id="Q9UMN6"/>
<dbReference type="ChEMBL" id="CHEMBL2189112"/>
<dbReference type="GlyGen" id="Q9UMN6">
    <property type="glycosylation" value="10 sites, 1 O-linked glycan (4 sites)"/>
</dbReference>
<dbReference type="iPTMnet" id="Q9UMN6"/>
<dbReference type="PhosphoSitePlus" id="Q9UMN6"/>
<dbReference type="SwissPalm" id="Q9UMN6"/>
<dbReference type="BioMuta" id="KMT2B"/>
<dbReference type="DMDM" id="12643900"/>
<dbReference type="jPOST" id="Q9UMN6"/>
<dbReference type="MassIVE" id="Q9UMN6"/>
<dbReference type="PaxDb" id="9606-ENSP00000398837"/>
<dbReference type="PeptideAtlas" id="Q9UMN6"/>
<dbReference type="Pumba" id="Q9UMN6"/>
<dbReference type="Antibodypedia" id="70148">
    <property type="antibodies" value="189 antibodies from 33 providers"/>
</dbReference>
<dbReference type="DNASU" id="9757"/>
<dbReference type="Ensembl" id="ENST00000420124.4">
    <property type="protein sequence ID" value="ENSP00000398837.2"/>
    <property type="gene ID" value="ENSG00000272333.8"/>
</dbReference>
<dbReference type="GeneID" id="9757"/>
<dbReference type="KEGG" id="hsa:9757"/>
<dbReference type="MANE-Select" id="ENST00000420124.4">
    <property type="protein sequence ID" value="ENSP00000398837.2"/>
    <property type="RefSeq nucleotide sequence ID" value="NM_014727.3"/>
    <property type="RefSeq protein sequence ID" value="NP_055542.1"/>
</dbReference>
<dbReference type="UCSC" id="uc021usv.1">
    <property type="organism name" value="human"/>
</dbReference>
<dbReference type="AGR" id="HGNC:15840"/>
<dbReference type="CTD" id="9757"/>
<dbReference type="DisGeNET" id="9757"/>
<dbReference type="GeneCards" id="KMT2B"/>
<dbReference type="GeneReviews" id="KMT2B"/>
<dbReference type="HGNC" id="HGNC:15840">
    <property type="gene designation" value="KMT2B"/>
</dbReference>
<dbReference type="HPA" id="ENSG00000272333">
    <property type="expression patterns" value="Low tissue specificity"/>
</dbReference>
<dbReference type="MalaCards" id="KMT2B"/>
<dbReference type="MIM" id="606834">
    <property type="type" value="gene"/>
</dbReference>
<dbReference type="MIM" id="617284">
    <property type="type" value="phenotype"/>
</dbReference>
<dbReference type="MIM" id="619934">
    <property type="type" value="phenotype"/>
</dbReference>
<dbReference type="neXtProt" id="NX_Q9UMN6"/>
<dbReference type="OpenTargets" id="ENSG00000272333"/>
<dbReference type="Orphanet" id="589618">
    <property type="disease" value="Dystonia 28"/>
</dbReference>
<dbReference type="Orphanet" id="528084">
    <property type="disease" value="Non-specific syndromic intellectual disability"/>
</dbReference>
<dbReference type="VEuPathDB" id="HostDB:ENSG00000272333"/>
<dbReference type="eggNOG" id="KOG1084">
    <property type="taxonomic scope" value="Eukaryota"/>
</dbReference>
<dbReference type="GeneTree" id="ENSGT00940000161496"/>
<dbReference type="HOGENOM" id="CLU_000208_1_0_1"/>
<dbReference type="InParanoid" id="Q9UMN6"/>
<dbReference type="OMA" id="GGGPCWK"/>
<dbReference type="OrthoDB" id="308383at2759"/>
<dbReference type="PAN-GO" id="Q9UMN6">
    <property type="GO annotations" value="4 GO annotations based on evolutionary models"/>
</dbReference>
<dbReference type="PhylomeDB" id="Q9UMN6"/>
<dbReference type="BioCyc" id="MetaCyc:HS02784-MONOMER"/>
<dbReference type="PathwayCommons" id="Q9UMN6"/>
<dbReference type="Reactome" id="R-HSA-3214841">
    <property type="pathway name" value="PKMTs methylate histone lysines"/>
</dbReference>
<dbReference type="Reactome" id="R-HSA-8936459">
    <property type="pathway name" value="RUNX1 regulates genes involved in megakaryocyte differentiation and platelet function"/>
</dbReference>
<dbReference type="Reactome" id="R-HSA-9772755">
    <property type="pathway name" value="Formation of WDR5-containing histone-modifying complexes"/>
</dbReference>
<dbReference type="SignaLink" id="Q9UMN6"/>
<dbReference type="BioGRID-ORCS" id="9757">
    <property type="hits" value="126 hits in 1076 CRISPR screens"/>
</dbReference>
<dbReference type="ChiTaRS" id="KMT2B">
    <property type="organism name" value="human"/>
</dbReference>
<dbReference type="EvolutionaryTrace" id="Q9UMN6"/>
<dbReference type="GeneWiki" id="MLL4"/>
<dbReference type="GenomeRNAi" id="9757"/>
<dbReference type="Pharos" id="Q9UMN6">
    <property type="development level" value="Tbio"/>
</dbReference>
<dbReference type="PRO" id="PR:Q9UMN6"/>
<dbReference type="Proteomes" id="UP000005640">
    <property type="component" value="Chromosome 19"/>
</dbReference>
<dbReference type="RNAct" id="Q9UMN6">
    <property type="molecule type" value="protein"/>
</dbReference>
<dbReference type="Bgee" id="ENSG00000272333">
    <property type="expression patterns" value="Expressed in right testis and 184 other cell types or tissues"/>
</dbReference>
<dbReference type="ExpressionAtlas" id="Q9UMN6">
    <property type="expression patterns" value="baseline and differential"/>
</dbReference>
<dbReference type="GO" id="GO:0035097">
    <property type="term" value="C:histone methyltransferase complex"/>
    <property type="evidence" value="ECO:0000314"/>
    <property type="project" value="MGI"/>
</dbReference>
<dbReference type="GO" id="GO:0044665">
    <property type="term" value="C:MLL1/2 complex"/>
    <property type="evidence" value="ECO:0000353"/>
    <property type="project" value="ComplexPortal"/>
</dbReference>
<dbReference type="GO" id="GO:0005654">
    <property type="term" value="C:nucleoplasm"/>
    <property type="evidence" value="ECO:0000304"/>
    <property type="project" value="Reactome"/>
</dbReference>
<dbReference type="GO" id="GO:0005634">
    <property type="term" value="C:nucleus"/>
    <property type="evidence" value="ECO:0000314"/>
    <property type="project" value="MGI"/>
</dbReference>
<dbReference type="GO" id="GO:0042800">
    <property type="term" value="F:histone H3K4 methyltransferase activity"/>
    <property type="evidence" value="ECO:0000314"/>
    <property type="project" value="MGI"/>
</dbReference>
<dbReference type="GO" id="GO:0140945">
    <property type="term" value="F:histone H3K4 monomethyltransferase activity"/>
    <property type="evidence" value="ECO:0007669"/>
    <property type="project" value="RHEA"/>
</dbReference>
<dbReference type="GO" id="GO:0140999">
    <property type="term" value="F:histone H3K4 trimethyltransferase activity"/>
    <property type="evidence" value="ECO:0007669"/>
    <property type="project" value="UniProtKB-EC"/>
</dbReference>
<dbReference type="GO" id="GO:0045322">
    <property type="term" value="F:unmethylated CpG binding"/>
    <property type="evidence" value="ECO:0000314"/>
    <property type="project" value="UniProtKB"/>
</dbReference>
<dbReference type="GO" id="GO:0008270">
    <property type="term" value="F:zinc ion binding"/>
    <property type="evidence" value="ECO:0000314"/>
    <property type="project" value="UniProtKB"/>
</dbReference>
<dbReference type="GO" id="GO:0032259">
    <property type="term" value="P:methylation"/>
    <property type="evidence" value="ECO:0007669"/>
    <property type="project" value="UniProtKB-KW"/>
</dbReference>
<dbReference type="GO" id="GO:0045893">
    <property type="term" value="P:positive regulation of DNA-templated transcription"/>
    <property type="evidence" value="ECO:0000318"/>
    <property type="project" value="GO_Central"/>
</dbReference>
<dbReference type="CDD" id="cd05493">
    <property type="entry name" value="Bromo_ALL-1"/>
    <property type="match status" value="1"/>
</dbReference>
<dbReference type="CDD" id="cd15694">
    <property type="entry name" value="ePHD_KMT2B"/>
    <property type="match status" value="1"/>
</dbReference>
<dbReference type="CDD" id="cd15589">
    <property type="entry name" value="PHD1_KMT2B"/>
    <property type="match status" value="1"/>
</dbReference>
<dbReference type="CDD" id="cd15591">
    <property type="entry name" value="PHD2_KMT2B"/>
    <property type="match status" value="1"/>
</dbReference>
<dbReference type="CDD" id="cd15593">
    <property type="entry name" value="PHD3_KMT2B"/>
    <property type="match status" value="1"/>
</dbReference>
<dbReference type="CDD" id="cd19170">
    <property type="entry name" value="SET_KMT2A_2B"/>
    <property type="match status" value="1"/>
</dbReference>
<dbReference type="FunFam" id="1.20.920.10:FF:000033">
    <property type="entry name" value="Histone-lysine N-methyltransferase"/>
    <property type="match status" value="1"/>
</dbReference>
<dbReference type="FunFam" id="2.170.270.10:FF:000004">
    <property type="entry name" value="Histone-lysine N-methyltransferase"/>
    <property type="match status" value="1"/>
</dbReference>
<dbReference type="FunFam" id="3.30.160.360:FF:000004">
    <property type="entry name" value="Histone-lysine N-methyltransferase"/>
    <property type="match status" value="1"/>
</dbReference>
<dbReference type="FunFam" id="3.30.160.360:FF:000006">
    <property type="entry name" value="Histone-lysine N-methyltransferase"/>
    <property type="match status" value="1"/>
</dbReference>
<dbReference type="FunFam" id="3.30.40.10:FF:000002">
    <property type="entry name" value="Histone-lysine N-methyltransferase"/>
    <property type="match status" value="1"/>
</dbReference>
<dbReference type="FunFam" id="3.30.40.10:FF:000071">
    <property type="entry name" value="Histone-lysine N-methyltransferase"/>
    <property type="match status" value="1"/>
</dbReference>
<dbReference type="FunFam" id="3.30.40.10:FF:000089">
    <property type="entry name" value="Histone-lysine N-methyltransferase"/>
    <property type="match status" value="1"/>
</dbReference>
<dbReference type="Gene3D" id="3.30.160.360">
    <property type="match status" value="2"/>
</dbReference>
<dbReference type="Gene3D" id="1.20.920.10">
    <property type="entry name" value="Bromodomain-like"/>
    <property type="match status" value="1"/>
</dbReference>
<dbReference type="Gene3D" id="2.170.270.10">
    <property type="entry name" value="SET domain"/>
    <property type="match status" value="1"/>
</dbReference>
<dbReference type="Gene3D" id="3.30.40.10">
    <property type="entry name" value="Zinc/RING finger domain, C3HC4 (zinc finger)"/>
    <property type="match status" value="3"/>
</dbReference>
<dbReference type="IDEAL" id="IID00400"/>
<dbReference type="InterPro" id="IPR036427">
    <property type="entry name" value="Bromodomain-like_sf"/>
</dbReference>
<dbReference type="InterPro" id="IPR034732">
    <property type="entry name" value="EPHD"/>
</dbReference>
<dbReference type="InterPro" id="IPR003889">
    <property type="entry name" value="FYrich_C"/>
</dbReference>
<dbReference type="InterPro" id="IPR003888">
    <property type="entry name" value="FYrich_N"/>
</dbReference>
<dbReference type="InterPro" id="IPR047219">
    <property type="entry name" value="KMT2A_2B_SET"/>
</dbReference>
<dbReference type="InterPro" id="IPR041959">
    <property type="entry name" value="KMT2B_ePHD"/>
</dbReference>
<dbReference type="InterPro" id="IPR016569">
    <property type="entry name" value="MeTrfase_trithorax"/>
</dbReference>
<dbReference type="InterPro" id="IPR003616">
    <property type="entry name" value="Post-SET_dom"/>
</dbReference>
<dbReference type="InterPro" id="IPR001214">
    <property type="entry name" value="SET_dom"/>
</dbReference>
<dbReference type="InterPro" id="IPR046341">
    <property type="entry name" value="SET_dom_sf"/>
</dbReference>
<dbReference type="InterPro" id="IPR002857">
    <property type="entry name" value="Znf_CXXC"/>
</dbReference>
<dbReference type="InterPro" id="IPR011011">
    <property type="entry name" value="Znf_FYVE_PHD"/>
</dbReference>
<dbReference type="InterPro" id="IPR001965">
    <property type="entry name" value="Znf_PHD"/>
</dbReference>
<dbReference type="InterPro" id="IPR019787">
    <property type="entry name" value="Znf_PHD-finger"/>
</dbReference>
<dbReference type="InterPro" id="IPR013083">
    <property type="entry name" value="Znf_RING/FYVE/PHD"/>
</dbReference>
<dbReference type="PANTHER" id="PTHR45838:SF3">
    <property type="entry name" value="HISTONE-LYSINE N-METHYLTRANSFERASE 2B"/>
    <property type="match status" value="1"/>
</dbReference>
<dbReference type="PANTHER" id="PTHR45838">
    <property type="entry name" value="HISTONE-LYSINE-N-METHYLTRANSFERASE 2 KMT2 FAMILY MEMBER"/>
    <property type="match status" value="1"/>
</dbReference>
<dbReference type="Pfam" id="PF05965">
    <property type="entry name" value="FYRC"/>
    <property type="match status" value="1"/>
</dbReference>
<dbReference type="Pfam" id="PF05964">
    <property type="entry name" value="FYRN"/>
    <property type="match status" value="1"/>
</dbReference>
<dbReference type="Pfam" id="PF00628">
    <property type="entry name" value="PHD"/>
    <property type="match status" value="2"/>
</dbReference>
<dbReference type="Pfam" id="PF00856">
    <property type="entry name" value="SET"/>
    <property type="match status" value="1"/>
</dbReference>
<dbReference type="Pfam" id="PF02008">
    <property type="entry name" value="zf-CXXC"/>
    <property type="match status" value="1"/>
</dbReference>
<dbReference type="Pfam" id="PF13771">
    <property type="entry name" value="zf-HC5HC2H"/>
    <property type="match status" value="1"/>
</dbReference>
<dbReference type="PIRSF" id="PIRSF010354">
    <property type="entry name" value="Methyltransferase_trithorax"/>
    <property type="match status" value="1"/>
</dbReference>
<dbReference type="PRINTS" id="PR01217">
    <property type="entry name" value="PRICHEXTENSN"/>
</dbReference>
<dbReference type="SMART" id="SM00542">
    <property type="entry name" value="FYRC"/>
    <property type="match status" value="1"/>
</dbReference>
<dbReference type="SMART" id="SM00541">
    <property type="entry name" value="FYRN"/>
    <property type="match status" value="1"/>
</dbReference>
<dbReference type="SMART" id="SM00249">
    <property type="entry name" value="PHD"/>
    <property type="match status" value="4"/>
</dbReference>
<dbReference type="SMART" id="SM00508">
    <property type="entry name" value="PostSET"/>
    <property type="match status" value="1"/>
</dbReference>
<dbReference type="SMART" id="SM00317">
    <property type="entry name" value="SET"/>
    <property type="match status" value="1"/>
</dbReference>
<dbReference type="SUPFAM" id="SSF57903">
    <property type="entry name" value="FYVE/PHD zinc finger"/>
    <property type="match status" value="2"/>
</dbReference>
<dbReference type="SUPFAM" id="SSF82199">
    <property type="entry name" value="SET domain"/>
    <property type="match status" value="1"/>
</dbReference>
<dbReference type="PROSITE" id="PS50014">
    <property type="entry name" value="BROMODOMAIN_2"/>
    <property type="match status" value="1"/>
</dbReference>
<dbReference type="PROSITE" id="PS51805">
    <property type="entry name" value="EPHD"/>
    <property type="match status" value="1"/>
</dbReference>
<dbReference type="PROSITE" id="PS51543">
    <property type="entry name" value="FYRC"/>
    <property type="match status" value="1"/>
</dbReference>
<dbReference type="PROSITE" id="PS51542">
    <property type="entry name" value="FYRN"/>
    <property type="match status" value="1"/>
</dbReference>
<dbReference type="PROSITE" id="PS50868">
    <property type="entry name" value="POST_SET"/>
    <property type="match status" value="1"/>
</dbReference>
<dbReference type="PROSITE" id="PS50280">
    <property type="entry name" value="SET"/>
    <property type="match status" value="1"/>
</dbReference>
<dbReference type="PROSITE" id="PS51058">
    <property type="entry name" value="ZF_CXXC"/>
    <property type="match status" value="1"/>
</dbReference>
<dbReference type="PROSITE" id="PS01359">
    <property type="entry name" value="ZF_PHD_1"/>
    <property type="match status" value="3"/>
</dbReference>
<dbReference type="PROSITE" id="PS50016">
    <property type="entry name" value="ZF_PHD_2"/>
    <property type="match status" value="3"/>
</dbReference>
<feature type="initiator methionine" description="Removed" evidence="35">
    <location>
        <position position="1"/>
    </location>
</feature>
<feature type="chain" id="PRO_0000124881" description="Histone-lysine N-methyltransferase 2B">
    <location>
        <begin position="2"/>
        <end position="2715"/>
    </location>
</feature>
<feature type="domain" description="Bromo" evidence="3">
    <location>
        <begin position="1404"/>
        <end position="1504"/>
    </location>
</feature>
<feature type="domain" description="FYR N-terminal" evidence="8">
    <location>
        <begin position="1727"/>
        <end position="1783"/>
    </location>
</feature>
<feature type="domain" description="FYR C-terminal" evidence="9">
    <location>
        <begin position="2411"/>
        <end position="2492"/>
    </location>
</feature>
<feature type="domain" description="SET" evidence="6">
    <location>
        <begin position="2575"/>
        <end position="2691"/>
    </location>
</feature>
<feature type="domain" description="Post-SET" evidence="5">
    <location>
        <begin position="2699"/>
        <end position="2715"/>
    </location>
</feature>
<feature type="DNA-binding region" description="A.T hook 1">
    <location>
        <begin position="37"/>
        <end position="44"/>
    </location>
</feature>
<feature type="DNA-binding region" description="A.T hook 2">
    <location>
        <begin position="110"/>
        <end position="117"/>
    </location>
</feature>
<feature type="DNA-binding region" description="A.T hook 3">
    <location>
        <begin position="357"/>
        <end position="365"/>
    </location>
</feature>
<feature type="zinc finger region" description="CXXC-type" evidence="7 25">
    <location>
        <begin position="959"/>
        <end position="1006"/>
    </location>
</feature>
<feature type="zinc finger region" description="PHD-type 1" evidence="4">
    <location>
        <begin position="1201"/>
        <end position="1252"/>
    </location>
</feature>
<feature type="zinc finger region" description="PHD-type 2" evidence="4">
    <location>
        <begin position="1249"/>
        <end position="1303"/>
    </location>
</feature>
<feature type="zinc finger region" description="PHD-type 3" evidence="4">
    <location>
        <begin position="1335"/>
        <end position="1396"/>
    </location>
</feature>
<feature type="zinc finger region" description="C2HC pre-PHD-type" evidence="10">
    <location>
        <begin position="1578"/>
        <end position="1618"/>
    </location>
</feature>
<feature type="zinc finger region" description="PHD-type 4" evidence="10">
    <location>
        <begin position="1639"/>
        <end position="1686"/>
    </location>
</feature>
<feature type="region of interest" description="Disordered" evidence="11">
    <location>
        <begin position="1"/>
        <end position="65"/>
    </location>
</feature>
<feature type="region of interest" description="Disordered" evidence="11">
    <location>
        <begin position="81"/>
        <end position="302"/>
    </location>
</feature>
<feature type="region of interest" description="Disordered" evidence="11">
    <location>
        <begin position="320"/>
        <end position="518"/>
    </location>
</feature>
<feature type="region of interest" description="Disordered" evidence="11">
    <location>
        <begin position="532"/>
        <end position="771"/>
    </location>
</feature>
<feature type="region of interest" description="Disordered" evidence="11">
    <location>
        <begin position="819"/>
        <end position="868"/>
    </location>
</feature>
<feature type="region of interest" description="Disordered" evidence="11">
    <location>
        <begin position="894"/>
        <end position="959"/>
    </location>
</feature>
<feature type="region of interest" description="Disordered" evidence="11">
    <location>
        <begin position="1027"/>
        <end position="1132"/>
    </location>
</feature>
<feature type="region of interest" description="Disordered" evidence="11">
    <location>
        <begin position="1146"/>
        <end position="1166"/>
    </location>
</feature>
<feature type="region of interest" description="Disordered" evidence="11">
    <location>
        <begin position="1545"/>
        <end position="1567"/>
    </location>
</feature>
<feature type="region of interest" description="Disordered" evidence="11">
    <location>
        <begin position="1806"/>
        <end position="1978"/>
    </location>
</feature>
<feature type="region of interest" description="Disordered" evidence="11">
    <location>
        <begin position="2008"/>
        <end position="2093"/>
    </location>
</feature>
<feature type="region of interest" description="Disordered" evidence="11">
    <location>
        <begin position="2118"/>
        <end position="2162"/>
    </location>
</feature>
<feature type="region of interest" description="Disordered" evidence="11">
    <location>
        <begin position="2280"/>
        <end position="2412"/>
    </location>
</feature>
<feature type="short sequence motif" description="Menin-binding motif (MBM)" evidence="17">
    <location>
        <begin position="17"/>
        <end position="36"/>
    </location>
</feature>
<feature type="short sequence motif" description="WDR5 interaction motif (WIN)" evidence="16 18">
    <location>
        <begin position="2508"/>
        <end position="2513"/>
    </location>
</feature>
<feature type="compositionally biased region" description="Gly residues" evidence="11">
    <location>
        <begin position="1"/>
        <end position="11"/>
    </location>
</feature>
<feature type="compositionally biased region" description="Low complexity" evidence="11">
    <location>
        <begin position="12"/>
        <end position="24"/>
    </location>
</feature>
<feature type="compositionally biased region" description="Gly residues" evidence="11">
    <location>
        <begin position="25"/>
        <end position="38"/>
    </location>
</feature>
<feature type="compositionally biased region" description="Gly residues" evidence="11">
    <location>
        <begin position="49"/>
        <end position="60"/>
    </location>
</feature>
<feature type="compositionally biased region" description="Acidic residues" evidence="11">
    <location>
        <begin position="109"/>
        <end position="123"/>
    </location>
</feature>
<feature type="compositionally biased region" description="Basic residues" evidence="11">
    <location>
        <begin position="144"/>
        <end position="158"/>
    </location>
</feature>
<feature type="compositionally biased region" description="Pro residues" evidence="11">
    <location>
        <begin position="160"/>
        <end position="176"/>
    </location>
</feature>
<feature type="compositionally biased region" description="Low complexity" evidence="11">
    <location>
        <begin position="199"/>
        <end position="208"/>
    </location>
</feature>
<feature type="compositionally biased region" description="Acidic residues" evidence="11">
    <location>
        <begin position="361"/>
        <end position="374"/>
    </location>
</feature>
<feature type="compositionally biased region" description="Basic and acidic residues" evidence="11">
    <location>
        <begin position="375"/>
        <end position="387"/>
    </location>
</feature>
<feature type="compositionally biased region" description="Pro residues" evidence="11">
    <location>
        <begin position="401"/>
        <end position="449"/>
    </location>
</feature>
<feature type="compositionally biased region" description="Basic and acidic residues" evidence="11">
    <location>
        <begin position="545"/>
        <end position="556"/>
    </location>
</feature>
<feature type="compositionally biased region" description="Pro residues" evidence="11">
    <location>
        <begin position="568"/>
        <end position="596"/>
    </location>
</feature>
<feature type="compositionally biased region" description="Basic and acidic residues" evidence="11">
    <location>
        <begin position="597"/>
        <end position="608"/>
    </location>
</feature>
<feature type="compositionally biased region" description="Pro residues" evidence="11">
    <location>
        <begin position="618"/>
        <end position="637"/>
    </location>
</feature>
<feature type="compositionally biased region" description="Low complexity" evidence="11">
    <location>
        <begin position="731"/>
        <end position="751"/>
    </location>
</feature>
<feature type="compositionally biased region" description="Pro residues" evidence="11">
    <location>
        <begin position="752"/>
        <end position="769"/>
    </location>
</feature>
<feature type="compositionally biased region" description="Basic and acidic residues" evidence="11">
    <location>
        <begin position="836"/>
        <end position="857"/>
    </location>
</feature>
<feature type="compositionally biased region" description="Low complexity" evidence="11">
    <location>
        <begin position="907"/>
        <end position="917"/>
    </location>
</feature>
<feature type="compositionally biased region" description="Basic residues" evidence="11">
    <location>
        <begin position="948"/>
        <end position="959"/>
    </location>
</feature>
<feature type="compositionally biased region" description="Low complexity" evidence="11">
    <location>
        <begin position="1876"/>
        <end position="1894"/>
    </location>
</feature>
<feature type="compositionally biased region" description="Pro residues" evidence="11">
    <location>
        <begin position="1960"/>
        <end position="1972"/>
    </location>
</feature>
<feature type="compositionally biased region" description="Acidic residues" evidence="11">
    <location>
        <begin position="2062"/>
        <end position="2072"/>
    </location>
</feature>
<feature type="compositionally biased region" description="Polar residues" evidence="11">
    <location>
        <begin position="2144"/>
        <end position="2153"/>
    </location>
</feature>
<feature type="compositionally biased region" description="Low complexity" evidence="11">
    <location>
        <begin position="2342"/>
        <end position="2351"/>
    </location>
</feature>
<feature type="compositionally biased region" description="Pro residues" evidence="11">
    <location>
        <begin position="2359"/>
        <end position="2373"/>
    </location>
</feature>
<feature type="binding site" evidence="7 25 33">
    <location>
        <position position="966"/>
    </location>
    <ligand>
        <name>Zn(2+)</name>
        <dbReference type="ChEBI" id="CHEBI:29105"/>
        <label>1</label>
    </ligand>
</feature>
<feature type="binding site" evidence="7 25 33">
    <location>
        <position position="969"/>
    </location>
    <ligand>
        <name>Zn(2+)</name>
        <dbReference type="ChEBI" id="CHEBI:29105"/>
        <label>1</label>
    </ligand>
</feature>
<feature type="binding site" evidence="7 25 33">
    <location>
        <position position="972"/>
    </location>
    <ligand>
        <name>Zn(2+)</name>
        <dbReference type="ChEBI" id="CHEBI:29105"/>
        <label>1</label>
    </ligand>
</feature>
<feature type="binding site" evidence="7 25 33">
    <location>
        <position position="978"/>
    </location>
    <ligand>
        <name>Zn(2+)</name>
        <dbReference type="ChEBI" id="CHEBI:29105"/>
        <label>2</label>
    </ligand>
</feature>
<feature type="binding site" evidence="7 25 33">
    <location>
        <position position="981"/>
    </location>
    <ligand>
        <name>Zn(2+)</name>
        <dbReference type="ChEBI" id="CHEBI:29105"/>
        <label>2</label>
    </ligand>
</feature>
<feature type="binding site" evidence="7 25 33">
    <location>
        <position position="984"/>
    </location>
    <ligand>
        <name>Zn(2+)</name>
        <dbReference type="ChEBI" id="CHEBI:29105"/>
        <label>2</label>
    </ligand>
</feature>
<feature type="binding site" evidence="7 25 33">
    <location>
        <position position="1000"/>
    </location>
    <ligand>
        <name>Zn(2+)</name>
        <dbReference type="ChEBI" id="CHEBI:29105"/>
        <label>2</label>
    </ligand>
</feature>
<feature type="binding site" evidence="7 25 33">
    <location>
        <position position="1005"/>
    </location>
    <ligand>
        <name>Zn(2+)</name>
        <dbReference type="ChEBI" id="CHEBI:29105"/>
        <label>1</label>
    </ligand>
</feature>
<feature type="binding site" evidence="6">
    <location>
        <position position="2585"/>
    </location>
    <ligand>
        <name>S-adenosyl-L-methionine</name>
        <dbReference type="ChEBI" id="CHEBI:59789"/>
    </ligand>
</feature>
<feature type="binding site" evidence="6">
    <location>
        <position position="2587"/>
    </location>
    <ligand>
        <name>S-adenosyl-L-methionine</name>
        <dbReference type="ChEBI" id="CHEBI:59789"/>
    </ligand>
</feature>
<feature type="binding site" evidence="6">
    <location>
        <position position="2629"/>
    </location>
    <ligand>
        <name>S-adenosyl-L-methionine</name>
        <dbReference type="ChEBI" id="CHEBI:59789"/>
    </ligand>
</feature>
<feature type="binding site" evidence="2">
    <location>
        <begin position="2652"/>
        <end position="2653"/>
    </location>
    <ligand>
        <name>S-adenosyl-L-methionine</name>
        <dbReference type="ChEBI" id="CHEBI:59789"/>
    </ligand>
</feature>
<feature type="binding site" evidence="2">
    <location>
        <position position="2655"/>
    </location>
    <ligand>
        <name>Zn(2+)</name>
        <dbReference type="ChEBI" id="CHEBI:29105"/>
    </ligand>
</feature>
<feature type="binding site" evidence="2">
    <location>
        <position position="2703"/>
    </location>
    <ligand>
        <name>Zn(2+)</name>
        <dbReference type="ChEBI" id="CHEBI:29105"/>
    </ligand>
</feature>
<feature type="binding site" evidence="6">
    <location>
        <position position="2704"/>
    </location>
    <ligand>
        <name>S-adenosyl-L-methionine</name>
        <dbReference type="ChEBI" id="CHEBI:59789"/>
    </ligand>
</feature>
<feature type="binding site" evidence="2">
    <location>
        <position position="2705"/>
    </location>
    <ligand>
        <name>Zn(2+)</name>
        <dbReference type="ChEBI" id="CHEBI:29105"/>
    </ligand>
</feature>
<feature type="binding site" evidence="2">
    <location>
        <position position="2710"/>
    </location>
    <ligand>
        <name>Zn(2+)</name>
        <dbReference type="ChEBI" id="CHEBI:29105"/>
    </ligand>
</feature>
<feature type="modified residue" description="N-acetylalanine" evidence="35">
    <location>
        <position position="2"/>
    </location>
</feature>
<feature type="modified residue" description="Phosphoserine" evidence="1">
    <location>
        <position position="113"/>
    </location>
</feature>
<feature type="modified residue" description="Phosphoserine" evidence="1">
    <location>
        <position position="114"/>
    </location>
</feature>
<feature type="modified residue" description="Phosphoserine" evidence="1">
    <location>
        <position position="118"/>
    </location>
</feature>
<feature type="modified residue" description="Phosphoserine" evidence="39">
    <location>
        <position position="351"/>
    </location>
</feature>
<feature type="modified residue" description="Phosphoserine" evidence="34 37 39">
    <location>
        <position position="821"/>
    </location>
</feature>
<feature type="modified residue" description="Phosphoserine" evidence="34 39">
    <location>
        <position position="844"/>
    </location>
</feature>
<feature type="modified residue" description="Phosphoserine" evidence="38 39 40">
    <location>
        <position position="861"/>
    </location>
</feature>
<feature type="modified residue" description="Phosphoserine" evidence="39">
    <location>
        <position position="936"/>
    </location>
</feature>
<feature type="modified residue" description="Phosphoserine" evidence="34">
    <location>
        <position position="1032"/>
    </location>
</feature>
<feature type="modified residue" description="Phosphoserine" evidence="34">
    <location>
        <position position="1035"/>
    </location>
</feature>
<feature type="modified residue" description="Phosphoserine" evidence="39">
    <location>
        <position position="1092"/>
    </location>
</feature>
<feature type="modified residue" description="Phosphoserine" evidence="39">
    <location>
        <position position="1095"/>
    </location>
</feature>
<feature type="modified residue" description="Phosphoserine" evidence="34">
    <location>
        <position position="1930"/>
    </location>
</feature>
<feature type="modified residue" description="Phosphoserine" evidence="39">
    <location>
        <position position="1936"/>
    </location>
</feature>
<feature type="modified residue" description="Phosphothreonine" evidence="36">
    <location>
        <position position="2068"/>
    </location>
</feature>
<feature type="modified residue" description="Phosphothreonine" evidence="36 39 40">
    <location>
        <position position="2083"/>
    </location>
</feature>
<feature type="modified residue" description="Phosphoserine" evidence="39">
    <location>
        <position position="2288"/>
    </location>
</feature>
<feature type="modified residue" description="Phosphoserine" evidence="39">
    <location>
        <position position="2348"/>
    </location>
</feature>
<feature type="cross-link" description="Glycyl lysine isopeptide (Lys-Gly) (interchain with G-Cter in SUMO2)" evidence="41">
    <location>
        <position position="805"/>
    </location>
</feature>
<feature type="cross-link" description="Glycyl lysine isopeptide (Lys-Gly) (interchain with G-Cter in SUMO2)" evidence="41">
    <location>
        <position position="1136"/>
    </location>
</feature>
<feature type="sequence variant" id="VAR_061913" description="In dbSNP:rs60207923.">
    <original>T</original>
    <variation>I</variation>
    <location>
        <position position="172"/>
    </location>
</feature>
<feature type="sequence variant" id="VAR_081649" evidence="26">
    <original>T</original>
    <variation>N</variation>
    <location>
        <position position="215"/>
    </location>
</feature>
<feature type="sequence variant" id="VAR_087544" description="In DYT28." evidence="27">
    <location>
        <begin position="284"/>
        <end position="2715"/>
    </location>
</feature>
<feature type="sequence variant" id="VAR_080233" description="In DYT28." evidence="22">
    <location>
        <begin position="545"/>
        <end position="2715"/>
    </location>
</feature>
<feature type="sequence variant" id="VAR_080234" description="In DYT28." evidence="23">
    <location>
        <begin position="564"/>
        <end position="2715"/>
    </location>
</feature>
<feature type="sequence variant" id="VAR_046563" description="In dbSNP:rs2242519.">
    <original>P</original>
    <variation>R</variation>
    <location>
        <position position="587"/>
    </location>
</feature>
<feature type="sequence variant" id="VAR_046564" description="In dbSNP:rs179686.">
    <original>P</original>
    <variation>L</variation>
    <location>
        <position position="754"/>
    </location>
</feature>
<feature type="sequence variant" id="VAR_080235" description="In DYT28." evidence="22">
    <location>
        <begin position="810"/>
        <end position="2715"/>
    </location>
</feature>
<feature type="sequence variant" id="VAR_046565" description="In dbSNP:rs1969321809.">
    <original>P</original>
    <variation>L</variation>
    <location>
        <position position="1097"/>
    </location>
</feature>
<feature type="sequence variant" id="VAR_087545" description="In MRD68." evidence="27">
    <original>C</original>
    <variation>Y</variation>
    <location>
        <position position="1222"/>
    </location>
</feature>
<feature type="sequence variant" id="VAR_087546" description="In MRD68." evidence="27">
    <location>
        <begin position="1295"/>
        <end position="2715"/>
    </location>
</feature>
<feature type="sequence variant" id="VAR_080236" description="In DYT28." evidence="23">
    <location>
        <begin position="1515"/>
        <end position="2715"/>
    </location>
</feature>
<feature type="sequence variant" id="VAR_087547" description="In MRD68; dbSNP:rs1239076295." evidence="27">
    <original>R</original>
    <variation>W</variation>
    <location>
        <position position="1597"/>
    </location>
</feature>
<feature type="sequence variant" id="VAR_080237" description="In DYT28; uncertain significance; dbSNP:rs1555731832." evidence="23">
    <original>G</original>
    <variation>D</variation>
    <location>
        <position position="1652"/>
    </location>
</feature>
<feature type="sequence variant" id="VAR_080238" description="In DYT28; uncertain significance; dbSNP:rs372432644." evidence="23">
    <original>F</original>
    <variation>L</variation>
    <location>
        <position position="1662"/>
    </location>
</feature>
<feature type="sequence variant" id="VAR_087548" description="In MRD68." evidence="27">
    <original>C</original>
    <variation>W</variation>
    <location>
        <position position="1682"/>
    </location>
</feature>
<feature type="sequence variant" id="VAR_080239" description="In DYT28; uncertain significance; dbSNP:rs1555731980." evidence="23">
    <original>R</original>
    <variation>Q</variation>
    <location>
        <position position="1705"/>
    </location>
</feature>
<feature type="sequence variant" id="VAR_080240" description="In DYT28; uncertain significance; dbSNP:rs1489232377." evidence="23">
    <original>R</original>
    <variation>C</variation>
    <location>
        <position position="1762"/>
    </location>
</feature>
<feature type="sequence variant" id="VAR_080241" description="In DYT28; uncertain significance; dbSNP:rs1555732094." evidence="23">
    <original>L</original>
    <variation>P</variation>
    <location>
        <position position="1781"/>
    </location>
</feature>
<feature type="sequence variant" id="VAR_052653" description="In dbSNP:rs16970649.">
    <original>P</original>
    <variation>L</variation>
    <location>
        <position position="1829"/>
    </location>
</feature>
<feature type="sequence variant" id="VAR_052654" description="In dbSNP:rs231591.">
    <original>D</original>
    <variation>G</variation>
    <location>
        <position position="2364"/>
    </location>
</feature>
<feature type="sequence variant" id="VAR_052655" description="In dbSNP:rs36062432.">
    <original>K</original>
    <variation>N</variation>
    <location>
        <position position="2408"/>
    </location>
</feature>
<feature type="sequence variant" id="VAR_080242" description="In DYT28; uncertain significance; dbSNP:rs1057519285." evidence="23">
    <original>R</original>
    <variation>W</variation>
    <location>
        <position position="2517"/>
    </location>
</feature>
<feature type="sequence variant" id="VAR_080243" description="In DYT28; uncertain significance; dbSNP:rs1555735051." evidence="23">
    <original>I</original>
    <variation>T</variation>
    <location>
        <position position="2674"/>
    </location>
</feature>
<feature type="mutagenesis site" description="Abolishes interaction with S-adenosyl-L-methionine." evidence="21">
    <original>N</original>
    <variation>A</variation>
    <location>
        <position position="2652"/>
    </location>
</feature>
<feature type="sequence conflict" description="In Ref. 6; AAD17932." evidence="28" ref="6">
    <original>K</original>
    <variation>E</variation>
    <location>
        <position position="834"/>
    </location>
</feature>
<feature type="sequence conflict" description="In Ref. 6; AAD17932." evidence="28" ref="6">
    <original>S</original>
    <variation>Y</variation>
    <location>
        <position position="941"/>
    </location>
</feature>
<feature type="sequence conflict" description="In Ref. 6; AAD17932." evidence="28" ref="6">
    <original>E</original>
    <variation>Q</variation>
    <location>
        <position position="1317"/>
    </location>
</feature>
<feature type="sequence conflict" description="In Ref. 6; AAD17932." evidence="28" ref="6">
    <original>H</original>
    <variation>Y</variation>
    <location>
        <position position="1362"/>
    </location>
</feature>
<feature type="sequence conflict" description="In Ref. 6; AAD17932." evidence="28" ref="6">
    <original>D</original>
    <variation>N</variation>
    <location>
        <position position="1438"/>
    </location>
</feature>
<feature type="sequence conflict" description="In Ref. 5; AAH09337." evidence="28" ref="5">
    <original>PLA</original>
    <variation>GTR</variation>
    <location>
        <begin position="1918"/>
        <end position="1920"/>
    </location>
</feature>
<feature type="sequence conflict" description="In Ref. 6; AAD26112." evidence="28" ref="6">
    <original>D</original>
    <variation>H</variation>
    <location>
        <position position="2622"/>
    </location>
</feature>
<feature type="helix" evidence="43">
    <location>
        <begin position="970"/>
        <end position="973"/>
    </location>
</feature>
<feature type="strand" evidence="43">
    <location>
        <begin position="979"/>
        <end position="981"/>
    </location>
</feature>
<feature type="helix" evidence="43">
    <location>
        <begin position="982"/>
        <end position="985"/>
    </location>
</feature>
<feature type="helix" evidence="43">
    <location>
        <begin position="988"/>
        <end position="990"/>
    </location>
</feature>
<feature type="helix" evidence="43">
    <location>
        <begin position="1001"/>
        <end position="1003"/>
    </location>
</feature>
<feature type="helix" evidence="43">
    <location>
        <begin position="1006"/>
        <end position="1015"/>
    </location>
</feature>
<feature type="helix" evidence="42">
    <location>
        <begin position="2510"/>
        <end position="2512"/>
    </location>
</feature>
<feature type="strand" evidence="44">
    <location>
        <begin position="2552"/>
        <end position="2554"/>
    </location>
</feature>
<feature type="helix" evidence="44">
    <location>
        <begin position="2559"/>
        <end position="2566"/>
    </location>
</feature>
<feature type="helix" evidence="44">
    <location>
        <begin position="2569"/>
        <end position="2576"/>
    </location>
</feature>
<feature type="strand" evidence="44">
    <location>
        <begin position="2577"/>
        <end position="2581"/>
    </location>
</feature>
<feature type="strand" evidence="44">
    <location>
        <begin position="2583"/>
        <end position="2593"/>
    </location>
</feature>
<feature type="strand" evidence="44">
    <location>
        <begin position="2600"/>
        <end position="2603"/>
    </location>
</feature>
<feature type="strand" evidence="44">
    <location>
        <begin position="2607"/>
        <end position="2610"/>
    </location>
</feature>
<feature type="helix" evidence="44">
    <location>
        <begin position="2611"/>
        <end position="2613"/>
    </location>
</feature>
<feature type="helix" evidence="44">
    <location>
        <begin position="2614"/>
        <end position="2624"/>
    </location>
</feature>
<feature type="strand" evidence="44">
    <location>
        <begin position="2630"/>
        <end position="2632"/>
    </location>
</feature>
<feature type="strand" evidence="44">
    <location>
        <begin position="2634"/>
        <end position="2640"/>
    </location>
</feature>
<feature type="strand" evidence="44">
    <location>
        <begin position="2642"/>
        <end position="2645"/>
    </location>
</feature>
<feature type="helix" evidence="44">
    <location>
        <begin position="2647"/>
        <end position="2650"/>
    </location>
</feature>
<feature type="strand" evidence="44">
    <location>
        <begin position="2658"/>
        <end position="2666"/>
    </location>
</feature>
<feature type="strand" evidence="44">
    <location>
        <begin position="2669"/>
        <end position="2678"/>
    </location>
</feature>
<protein>
    <recommendedName>
        <fullName>Histone-lysine N-methyltransferase 2B</fullName>
        <shortName>Lysine N-methyltransferase 2B</shortName>
        <ecNumber evidence="21">2.1.1.364</ecNumber>
    </recommendedName>
    <alternativeName>
        <fullName>Myeloid/lymphoid or mixed-lineage leukemia protein 4</fullName>
    </alternativeName>
    <alternativeName>
        <fullName>Trithorax homolog 2</fullName>
    </alternativeName>
    <alternativeName>
        <fullName>WW domain-binding protein 7</fullName>
        <shortName>WBP-7</shortName>
    </alternativeName>
</protein>